<accession>P47507</accession>
<sequence length="278" mass="31864">MELKNIIFDLDGTLLSSNQIPLEQTVEFLKDLQKKGIRITFASGRSHILIRNTATFITPNLPVISSNGALVYDFASEKPVHIKPIDNKVIPAIMQMLLEFQETFYFYTDKKVFAFTHELDSAKILSTRSQIVGIDLIENNYIVNKFEKALDFDFKQHTITKILLVTKNREKVPFLAKQLDQIQDINYVSSMTFALDIMQKDVNKAYGLKVLVDNYNLDPEKTMVFGDADNDVEIFQSVKWPVALVNGTDLAKKNAKFITEYDNNHNGIYFFLKKFLAT</sequence>
<dbReference type="EC" id="3.1.3.-"/>
<dbReference type="EMBL" id="L43967">
    <property type="protein sequence ID" value="AAC71487.1"/>
    <property type="molecule type" value="Genomic_DNA"/>
</dbReference>
<dbReference type="PIR" id="C64229">
    <property type="entry name" value="C64229"/>
</dbReference>
<dbReference type="RefSeq" id="WP_009885896.1">
    <property type="nucleotide sequence ID" value="NC_000908.2"/>
</dbReference>
<dbReference type="SMR" id="P47507"/>
<dbReference type="FunCoup" id="P47507">
    <property type="interactions" value="50"/>
</dbReference>
<dbReference type="STRING" id="243273.MG_265"/>
<dbReference type="GeneID" id="88282420"/>
<dbReference type="KEGG" id="mge:MG_265"/>
<dbReference type="eggNOG" id="COG0561">
    <property type="taxonomic scope" value="Bacteria"/>
</dbReference>
<dbReference type="HOGENOM" id="CLU_044146_3_1_14"/>
<dbReference type="InParanoid" id="P47507"/>
<dbReference type="OrthoDB" id="388395at2"/>
<dbReference type="BioCyc" id="MGEN243273:G1GJ2-321-MONOMER"/>
<dbReference type="Proteomes" id="UP000000807">
    <property type="component" value="Chromosome"/>
</dbReference>
<dbReference type="GO" id="GO:0005829">
    <property type="term" value="C:cytosol"/>
    <property type="evidence" value="ECO:0000318"/>
    <property type="project" value="GO_Central"/>
</dbReference>
<dbReference type="GO" id="GO:0000287">
    <property type="term" value="F:magnesium ion binding"/>
    <property type="evidence" value="ECO:0000318"/>
    <property type="project" value="GO_Central"/>
</dbReference>
<dbReference type="GO" id="GO:0016791">
    <property type="term" value="F:phosphatase activity"/>
    <property type="evidence" value="ECO:0000318"/>
    <property type="project" value="GO_Central"/>
</dbReference>
<dbReference type="CDD" id="cd07516">
    <property type="entry name" value="HAD_Pase"/>
    <property type="match status" value="1"/>
</dbReference>
<dbReference type="Gene3D" id="3.30.1240.10">
    <property type="match status" value="1"/>
</dbReference>
<dbReference type="Gene3D" id="3.40.50.1000">
    <property type="entry name" value="HAD superfamily/HAD-like"/>
    <property type="match status" value="1"/>
</dbReference>
<dbReference type="InterPro" id="IPR000150">
    <property type="entry name" value="Cof"/>
</dbReference>
<dbReference type="InterPro" id="IPR036412">
    <property type="entry name" value="HAD-like_sf"/>
</dbReference>
<dbReference type="InterPro" id="IPR006379">
    <property type="entry name" value="HAD-SF_hydro_IIB"/>
</dbReference>
<dbReference type="InterPro" id="IPR023214">
    <property type="entry name" value="HAD_sf"/>
</dbReference>
<dbReference type="NCBIfam" id="TIGR00099">
    <property type="entry name" value="Cof-subfamily"/>
    <property type="match status" value="1"/>
</dbReference>
<dbReference type="NCBIfam" id="TIGR01484">
    <property type="entry name" value="HAD-SF-IIB"/>
    <property type="match status" value="1"/>
</dbReference>
<dbReference type="PANTHER" id="PTHR10000:SF8">
    <property type="entry name" value="HAD SUPERFAMILY HYDROLASE-LIKE, TYPE 3"/>
    <property type="match status" value="1"/>
</dbReference>
<dbReference type="PANTHER" id="PTHR10000">
    <property type="entry name" value="PHOSPHOSERINE PHOSPHATASE"/>
    <property type="match status" value="1"/>
</dbReference>
<dbReference type="Pfam" id="PF08282">
    <property type="entry name" value="Hydrolase_3"/>
    <property type="match status" value="1"/>
</dbReference>
<dbReference type="SFLD" id="SFLDG01140">
    <property type="entry name" value="C2.B:_Phosphomannomutase_and_P"/>
    <property type="match status" value="1"/>
</dbReference>
<dbReference type="SFLD" id="SFLDS00003">
    <property type="entry name" value="Haloacid_Dehalogenase"/>
    <property type="match status" value="1"/>
</dbReference>
<dbReference type="SUPFAM" id="SSF56784">
    <property type="entry name" value="HAD-like"/>
    <property type="match status" value="1"/>
</dbReference>
<dbReference type="PROSITE" id="PS01228">
    <property type="entry name" value="COF_1"/>
    <property type="match status" value="1"/>
</dbReference>
<dbReference type="PROSITE" id="PS01229">
    <property type="entry name" value="COF_2"/>
    <property type="match status" value="1"/>
</dbReference>
<gene>
    <name type="ordered locus">MG265</name>
</gene>
<protein>
    <recommendedName>
        <fullName>Putative phosphatase MG265</fullName>
        <ecNumber>3.1.3.-</ecNumber>
    </recommendedName>
</protein>
<reference key="1">
    <citation type="journal article" date="1995" name="Science">
        <title>The minimal gene complement of Mycoplasma genitalium.</title>
        <authorList>
            <person name="Fraser C.M."/>
            <person name="Gocayne J.D."/>
            <person name="White O."/>
            <person name="Adams M.D."/>
            <person name="Clayton R.A."/>
            <person name="Fleischmann R.D."/>
            <person name="Bult C.J."/>
            <person name="Kerlavage A.R."/>
            <person name="Sutton G.G."/>
            <person name="Kelley J.M."/>
            <person name="Fritchman J.L."/>
            <person name="Weidman J.F."/>
            <person name="Small K.V."/>
            <person name="Sandusky M."/>
            <person name="Fuhrmann J.L."/>
            <person name="Nguyen D.T."/>
            <person name="Utterback T.R."/>
            <person name="Saudek D.M."/>
            <person name="Phillips C.A."/>
            <person name="Merrick J.M."/>
            <person name="Tomb J.-F."/>
            <person name="Dougherty B.A."/>
            <person name="Bott K.F."/>
            <person name="Hu P.-C."/>
            <person name="Lucier T.S."/>
            <person name="Peterson S.N."/>
            <person name="Smith H.O."/>
            <person name="Hutchison C.A. III"/>
            <person name="Venter J.C."/>
        </authorList>
    </citation>
    <scope>NUCLEOTIDE SEQUENCE [LARGE SCALE GENOMIC DNA]</scope>
    <source>
        <strain>ATCC 33530 / DSM 19775 / NCTC 10195 / G37</strain>
    </source>
</reference>
<name>Y265_MYCGE</name>
<feature type="chain" id="PRO_0000054439" description="Putative phosphatase MG265">
    <location>
        <begin position="1"/>
        <end position="278"/>
    </location>
</feature>
<feature type="active site" description="Nucleophile" evidence="1">
    <location>
        <position position="9"/>
    </location>
</feature>
<feature type="binding site" evidence="1">
    <location>
        <position position="9"/>
    </location>
    <ligand>
        <name>Mg(2+)</name>
        <dbReference type="ChEBI" id="CHEBI:18420"/>
    </ligand>
</feature>
<feature type="binding site" evidence="1">
    <location>
        <position position="10"/>
    </location>
    <ligand>
        <name>phosphate</name>
        <dbReference type="ChEBI" id="CHEBI:43474"/>
    </ligand>
</feature>
<feature type="binding site" evidence="1">
    <location>
        <position position="11"/>
    </location>
    <ligand>
        <name>Mg(2+)</name>
        <dbReference type="ChEBI" id="CHEBI:18420"/>
    </ligand>
</feature>
<feature type="binding site" evidence="1">
    <location>
        <begin position="43"/>
        <end position="44"/>
    </location>
    <ligand>
        <name>phosphate</name>
        <dbReference type="ChEBI" id="CHEBI:43474"/>
    </ligand>
</feature>
<feature type="binding site" evidence="1">
    <location>
        <position position="204"/>
    </location>
    <ligand>
        <name>phosphate</name>
        <dbReference type="ChEBI" id="CHEBI:43474"/>
    </ligand>
</feature>
<feature type="binding site" evidence="1">
    <location>
        <position position="227"/>
    </location>
    <ligand>
        <name>Mg(2+)</name>
        <dbReference type="ChEBI" id="CHEBI:18420"/>
    </ligand>
</feature>
<feature type="binding site" evidence="1">
    <location>
        <position position="230"/>
    </location>
    <ligand>
        <name>phosphate</name>
        <dbReference type="ChEBI" id="CHEBI:43474"/>
    </ligand>
</feature>
<comment type="cofactor">
    <cofactor evidence="1">
        <name>Mg(2+)</name>
        <dbReference type="ChEBI" id="CHEBI:18420"/>
    </cofactor>
</comment>
<comment type="similarity">
    <text evidence="2">Belongs to the HAD-like hydrolase superfamily. Cof family.</text>
</comment>
<organism>
    <name type="scientific">Mycoplasma genitalium (strain ATCC 33530 / DSM 19775 / NCTC 10195 / G37)</name>
    <name type="common">Mycoplasmoides genitalium</name>
    <dbReference type="NCBI Taxonomy" id="243273"/>
    <lineage>
        <taxon>Bacteria</taxon>
        <taxon>Bacillati</taxon>
        <taxon>Mycoplasmatota</taxon>
        <taxon>Mycoplasmoidales</taxon>
        <taxon>Mycoplasmoidaceae</taxon>
        <taxon>Mycoplasmoides</taxon>
    </lineage>
</organism>
<keyword id="KW-0378">Hydrolase</keyword>
<keyword id="KW-0460">Magnesium</keyword>
<keyword id="KW-0479">Metal-binding</keyword>
<keyword id="KW-1185">Reference proteome</keyword>
<proteinExistence type="inferred from homology"/>
<evidence type="ECO:0000250" key="1"/>
<evidence type="ECO:0000305" key="2"/>